<name>AR2BP_XENLA</name>
<evidence type="ECO:0000250" key="1"/>
<evidence type="ECO:0000303" key="2">
    <source ref="1"/>
</evidence>
<evidence type="ECO:0000305" key="3"/>
<accession>Q6DDX7</accession>
<accession>Q6GLJ7</accession>
<gene>
    <name type="primary">arl2bp</name>
</gene>
<proteinExistence type="evidence at transcript level"/>
<dbReference type="EMBL" id="BC074487">
    <property type="protein sequence ID" value="AAH74487.1"/>
    <property type="molecule type" value="mRNA"/>
</dbReference>
<dbReference type="EMBL" id="BC077374">
    <property type="protein sequence ID" value="AAH77374.1"/>
    <property type="molecule type" value="mRNA"/>
</dbReference>
<dbReference type="EMBL" id="BC108523">
    <property type="protein sequence ID" value="AAI08524.1"/>
    <property type="molecule type" value="mRNA"/>
</dbReference>
<dbReference type="RefSeq" id="NP_001086325.1">
    <molecule id="Q6DDX7-1"/>
    <property type="nucleotide sequence ID" value="NM_001092856.1"/>
</dbReference>
<dbReference type="SMR" id="Q6DDX7"/>
<dbReference type="DNASU" id="444754"/>
<dbReference type="GeneID" id="444754"/>
<dbReference type="KEGG" id="xla:444754"/>
<dbReference type="AGR" id="Xenbase:XB-GENE-6254371"/>
<dbReference type="CTD" id="444754"/>
<dbReference type="Xenbase" id="XB-GENE-6254371">
    <property type="gene designation" value="arl2bp.L"/>
</dbReference>
<dbReference type="OrthoDB" id="302784at2759"/>
<dbReference type="Proteomes" id="UP000186698">
    <property type="component" value="Chromosome 4L"/>
</dbReference>
<dbReference type="Bgee" id="444754">
    <property type="expression patterns" value="Expressed in blastula and 19 other cell types or tissues"/>
</dbReference>
<dbReference type="GO" id="GO:0005813">
    <property type="term" value="C:centrosome"/>
    <property type="evidence" value="ECO:0007669"/>
    <property type="project" value="UniProtKB-SubCell"/>
</dbReference>
<dbReference type="GO" id="GO:0005929">
    <property type="term" value="C:cilium"/>
    <property type="evidence" value="ECO:0007669"/>
    <property type="project" value="UniProtKB-KW"/>
</dbReference>
<dbReference type="GO" id="GO:0005758">
    <property type="term" value="C:mitochondrial intermembrane space"/>
    <property type="evidence" value="ECO:0000318"/>
    <property type="project" value="GO_Central"/>
</dbReference>
<dbReference type="GO" id="GO:0005634">
    <property type="term" value="C:nucleus"/>
    <property type="evidence" value="ECO:0007669"/>
    <property type="project" value="UniProtKB-SubCell"/>
</dbReference>
<dbReference type="GO" id="GO:0005819">
    <property type="term" value="C:spindle"/>
    <property type="evidence" value="ECO:0007669"/>
    <property type="project" value="UniProtKB-SubCell"/>
</dbReference>
<dbReference type="GO" id="GO:0051457">
    <property type="term" value="P:maintenance of protein location in nucleus"/>
    <property type="evidence" value="ECO:0007669"/>
    <property type="project" value="TreeGrafter"/>
</dbReference>
<dbReference type="Gene3D" id="1.20.1520.10">
    <property type="entry name" value="ADP-ribosylation factor-like 2-binding protein, domain"/>
    <property type="match status" value="1"/>
</dbReference>
<dbReference type="InterPro" id="IPR038849">
    <property type="entry name" value="ARL2BP"/>
</dbReference>
<dbReference type="InterPro" id="IPR023379">
    <property type="entry name" value="BART_dom"/>
</dbReference>
<dbReference type="InterPro" id="IPR042541">
    <property type="entry name" value="BART_sf"/>
</dbReference>
<dbReference type="PANTHER" id="PTHR15487">
    <property type="entry name" value="ADP-RIBOSYLATION FACTOR-LIKE PROTEIN 2-BINDING PROTEIN"/>
    <property type="match status" value="1"/>
</dbReference>
<dbReference type="PANTHER" id="PTHR15487:SF4">
    <property type="entry name" value="ADP-RIBOSYLATION FACTOR-LIKE PROTEIN 2-BINDING PROTEIN"/>
    <property type="match status" value="1"/>
</dbReference>
<dbReference type="Pfam" id="PF11527">
    <property type="entry name" value="ARL2_Bind_BART"/>
    <property type="match status" value="1"/>
</dbReference>
<reference key="1">
    <citation type="submission" date="2005-11" db="EMBL/GenBank/DDBJ databases">
        <authorList>
            <consortium name="NIH - Xenopus Gene Collection (XGC) project"/>
        </authorList>
    </citation>
    <scope>NUCLEOTIDE SEQUENCE [LARGE SCALE MRNA] (ISOFORMS 1 AND 2)</scope>
    <source>
        <tissue>Brain</tissue>
        <tissue>Embryo</tissue>
        <tissue>Testis</tissue>
    </source>
</reference>
<comment type="function">
    <text evidence="1">Plays a role as an effector of the ADP-ribosylation factor-like protein 2, ARL2.</text>
</comment>
<comment type="subcellular location">
    <subcellularLocation>
        <location evidence="1">Cytoplasm</location>
    </subcellularLocation>
    <subcellularLocation>
        <location evidence="1">Mitochondrion intermembrane space</location>
    </subcellularLocation>
    <subcellularLocation>
        <location evidence="1">Cytoplasm</location>
        <location evidence="1">Cytoskeleton</location>
        <location evidence="1">Microtubule organizing center</location>
        <location evidence="1">Centrosome</location>
    </subcellularLocation>
    <subcellularLocation>
        <location evidence="1">Nucleus</location>
    </subcellularLocation>
    <subcellularLocation>
        <location evidence="1">Cytoplasm</location>
        <location evidence="1">Cytoskeleton</location>
        <location evidence="1">Spindle</location>
    </subcellularLocation>
    <subcellularLocation>
        <location evidence="1">Cytoplasm</location>
        <location evidence="1">Cytoskeleton</location>
        <location evidence="1">Cilium basal body</location>
    </subcellularLocation>
    <text evidence="1">Detected in the midbody matrix. Not detected in the Golgi, nucleus and on the mitotic spindle. Centrosome-associated throughout the cell cycle. Not detected to interphase microtubules. The complex formed with ARL2BP, ARL2 and SLC25A4 is expressed in mitochondria (By similarity).</text>
</comment>
<comment type="alternative products">
    <event type="alternative splicing"/>
    <isoform>
        <id>Q6DDX7-1</id>
        <name>1</name>
        <sequence type="displayed"/>
    </isoform>
    <isoform>
        <id>Q6DDX7-2</id>
        <name>2</name>
        <sequence type="described" ref="VSP_025322 VSP_025323"/>
    </isoform>
</comment>
<comment type="similarity">
    <text evidence="3">Belongs to the ARL2BP family.</text>
</comment>
<organism>
    <name type="scientific">Xenopus laevis</name>
    <name type="common">African clawed frog</name>
    <dbReference type="NCBI Taxonomy" id="8355"/>
    <lineage>
        <taxon>Eukaryota</taxon>
        <taxon>Metazoa</taxon>
        <taxon>Chordata</taxon>
        <taxon>Craniata</taxon>
        <taxon>Vertebrata</taxon>
        <taxon>Euteleostomi</taxon>
        <taxon>Amphibia</taxon>
        <taxon>Batrachia</taxon>
        <taxon>Anura</taxon>
        <taxon>Pipoidea</taxon>
        <taxon>Pipidae</taxon>
        <taxon>Xenopodinae</taxon>
        <taxon>Xenopus</taxon>
        <taxon>Xenopus</taxon>
    </lineage>
</organism>
<keyword id="KW-0025">Alternative splicing</keyword>
<keyword id="KW-0966">Cell projection</keyword>
<keyword id="KW-0969">Cilium</keyword>
<keyword id="KW-0963">Cytoplasm</keyword>
<keyword id="KW-0206">Cytoskeleton</keyword>
<keyword id="KW-0496">Mitochondrion</keyword>
<keyword id="KW-0539">Nucleus</keyword>
<keyword id="KW-1185">Reference proteome</keyword>
<protein>
    <recommendedName>
        <fullName>ADP-ribosylation factor-like protein 2-binding protein</fullName>
        <shortName>ARF-like 2-binding protein</shortName>
    </recommendedName>
</protein>
<sequence>MEDLEEENFSLSVSSPKDAEFDNVVGHLEDIIMDDEFQLLQHGFMDKHYHEFEDTEENKLTYTTIFNEYIGLVEKYIEEQLLQRIPAFDMSAFTSSLQCHREEIAGDIFDILLTFTDFLAFKEMFLDYKAEKEGRTVDLGCGLVVTSLMSSSISSS</sequence>
<feature type="chain" id="PRO_0000287120" description="ADP-ribosylation factor-like protein 2-binding protein">
    <location>
        <begin position="1"/>
        <end position="156"/>
    </location>
</feature>
<feature type="splice variant" id="VSP_025322" description="In isoform 2." evidence="2">
    <original>IGLVEKYIEEQLLQRIPAFDMSAFTSSLQCHR</original>
    <variation>VSCKLNLSVLLPYLLCNLSTLRFHPVSVTKNT</variation>
    <location>
        <begin position="70"/>
        <end position="101"/>
    </location>
</feature>
<feature type="splice variant" id="VSP_025323" description="In isoform 2." evidence="2">
    <location>
        <begin position="102"/>
        <end position="156"/>
    </location>
</feature>